<name>PLSY_ZYMMO</name>
<protein>
    <recommendedName>
        <fullName evidence="1">Glycerol-3-phosphate acyltransferase</fullName>
    </recommendedName>
    <alternativeName>
        <fullName evidence="1">Acyl-PO4 G3P acyltransferase</fullName>
    </alternativeName>
    <alternativeName>
        <fullName evidence="1">Acyl-phosphate--glycerol-3-phosphate acyltransferase</fullName>
    </alternativeName>
    <alternativeName>
        <fullName evidence="1">G3P acyltransferase</fullName>
        <shortName evidence="1">GPAT</shortName>
        <ecNumber evidence="1">2.3.1.275</ecNumber>
    </alternativeName>
    <alternativeName>
        <fullName evidence="1">Lysophosphatidic acid synthase</fullName>
        <shortName evidence="1">LPA synthase</shortName>
    </alternativeName>
</protein>
<gene>
    <name evidence="1" type="primary">plsY</name>
    <name type="ordered locus">ZMO1195</name>
</gene>
<evidence type="ECO:0000255" key="1">
    <source>
        <dbReference type="HAMAP-Rule" id="MF_01043"/>
    </source>
</evidence>
<proteinExistence type="inferred from homology"/>
<keyword id="KW-0997">Cell inner membrane</keyword>
<keyword id="KW-1003">Cell membrane</keyword>
<keyword id="KW-0444">Lipid biosynthesis</keyword>
<keyword id="KW-0443">Lipid metabolism</keyword>
<keyword id="KW-0472">Membrane</keyword>
<keyword id="KW-0594">Phospholipid biosynthesis</keyword>
<keyword id="KW-1208">Phospholipid metabolism</keyword>
<keyword id="KW-1185">Reference proteome</keyword>
<keyword id="KW-0808">Transferase</keyword>
<keyword id="KW-0812">Transmembrane</keyword>
<keyword id="KW-1133">Transmembrane helix</keyword>
<comment type="function">
    <text evidence="1">Catalyzes the transfer of an acyl group from acyl-phosphate (acyl-PO(4)) to glycerol-3-phosphate (G3P) to form lysophosphatidic acid (LPA). This enzyme utilizes acyl-phosphate as fatty acyl donor, but not acyl-CoA or acyl-ACP.</text>
</comment>
<comment type="catalytic activity">
    <reaction evidence="1">
        <text>an acyl phosphate + sn-glycerol 3-phosphate = a 1-acyl-sn-glycero-3-phosphate + phosphate</text>
        <dbReference type="Rhea" id="RHEA:34075"/>
        <dbReference type="ChEBI" id="CHEBI:43474"/>
        <dbReference type="ChEBI" id="CHEBI:57597"/>
        <dbReference type="ChEBI" id="CHEBI:57970"/>
        <dbReference type="ChEBI" id="CHEBI:59918"/>
        <dbReference type="EC" id="2.3.1.275"/>
    </reaction>
</comment>
<comment type="pathway">
    <text evidence="1">Lipid metabolism; phospholipid metabolism.</text>
</comment>
<comment type="subunit">
    <text evidence="1">Probably interacts with PlsX.</text>
</comment>
<comment type="subcellular location">
    <subcellularLocation>
        <location evidence="1">Cell inner membrane</location>
        <topology evidence="1">Multi-pass membrane protein</topology>
    </subcellularLocation>
</comment>
<comment type="similarity">
    <text evidence="1">Belongs to the PlsY family.</text>
</comment>
<feature type="chain" id="PRO_0000188495" description="Glycerol-3-phosphate acyltransferase">
    <location>
        <begin position="1"/>
        <end position="212"/>
    </location>
</feature>
<feature type="transmembrane region" description="Helical" evidence="1">
    <location>
        <begin position="6"/>
        <end position="26"/>
    </location>
</feature>
<feature type="transmembrane region" description="Helical" evidence="1">
    <location>
        <begin position="56"/>
        <end position="76"/>
    </location>
</feature>
<feature type="transmembrane region" description="Helical" evidence="1">
    <location>
        <begin position="92"/>
        <end position="112"/>
    </location>
</feature>
<feature type="transmembrane region" description="Helical" evidence="1">
    <location>
        <begin position="122"/>
        <end position="142"/>
    </location>
</feature>
<feature type="transmembrane region" description="Helical" evidence="1">
    <location>
        <begin position="150"/>
        <end position="170"/>
    </location>
</feature>
<feature type="transmembrane region" description="Helical" evidence="1">
    <location>
        <begin position="171"/>
        <end position="191"/>
    </location>
</feature>
<sequence>MSLEMIAVLIFTMGYLLGSVPFGLILARLFGSVDVRQVGSGNIGATNVLRTGRKDLAALTLFFDIGKGALAVLLAHGFSYHLYQQTGCAPDLTLIAGAAAFLGHCYPVWLGFRGGKGVATMLGVSFAAWWVAGVVFAVAWLLSAKISRYSSVGGMVGAIAATISVMFMPASHEIHQVYIALFSGMTILLLWRHRGNIKRLLSGQESRIGDPQ</sequence>
<reference key="1">
    <citation type="journal article" date="2005" name="Nat. Biotechnol.">
        <title>The genome sequence of the ethanologenic bacterium Zymomonas mobilis ZM4.</title>
        <authorList>
            <person name="Seo J.-S."/>
            <person name="Chong H."/>
            <person name="Park H.S."/>
            <person name="Yoon K.-O."/>
            <person name="Jung C."/>
            <person name="Kim J.J."/>
            <person name="Hong J.H."/>
            <person name="Kim H."/>
            <person name="Kim J.-H."/>
            <person name="Kil J.-I."/>
            <person name="Park C.J."/>
            <person name="Oh H.-M."/>
            <person name="Lee J.-S."/>
            <person name="Jin S.-J."/>
            <person name="Um H.-W."/>
            <person name="Lee H.-J."/>
            <person name="Oh S.-J."/>
            <person name="Kim J.Y."/>
            <person name="Kang H.L."/>
            <person name="Lee S.Y."/>
            <person name="Lee K.J."/>
            <person name="Kang H.S."/>
        </authorList>
    </citation>
    <scope>NUCLEOTIDE SEQUENCE [LARGE SCALE GENOMIC DNA]</scope>
    <source>
        <strain>ATCC 31821 / ZM4 / CP4</strain>
    </source>
</reference>
<accession>Q5NN91</accession>
<organism>
    <name type="scientific">Zymomonas mobilis subsp. mobilis (strain ATCC 31821 / ZM4 / CP4)</name>
    <dbReference type="NCBI Taxonomy" id="264203"/>
    <lineage>
        <taxon>Bacteria</taxon>
        <taxon>Pseudomonadati</taxon>
        <taxon>Pseudomonadota</taxon>
        <taxon>Alphaproteobacteria</taxon>
        <taxon>Sphingomonadales</taxon>
        <taxon>Zymomonadaceae</taxon>
        <taxon>Zymomonas</taxon>
    </lineage>
</organism>
<dbReference type="EC" id="2.3.1.275" evidence="1"/>
<dbReference type="EMBL" id="AE008692">
    <property type="protein sequence ID" value="AAV89819.2"/>
    <property type="molecule type" value="Genomic_DNA"/>
</dbReference>
<dbReference type="RefSeq" id="WP_011241018.1">
    <property type="nucleotide sequence ID" value="NZ_CP035711.1"/>
</dbReference>
<dbReference type="SMR" id="Q5NN91"/>
<dbReference type="STRING" id="264203.ZMO1195"/>
<dbReference type="GeneID" id="79903682"/>
<dbReference type="KEGG" id="zmo:ZMO1195"/>
<dbReference type="eggNOG" id="COG0344">
    <property type="taxonomic scope" value="Bacteria"/>
</dbReference>
<dbReference type="HOGENOM" id="CLU_081254_1_0_5"/>
<dbReference type="UniPathway" id="UPA00085"/>
<dbReference type="Proteomes" id="UP000001173">
    <property type="component" value="Chromosome"/>
</dbReference>
<dbReference type="GO" id="GO:0005886">
    <property type="term" value="C:plasma membrane"/>
    <property type="evidence" value="ECO:0007669"/>
    <property type="project" value="UniProtKB-SubCell"/>
</dbReference>
<dbReference type="GO" id="GO:0043772">
    <property type="term" value="F:acyl-phosphate glycerol-3-phosphate acyltransferase activity"/>
    <property type="evidence" value="ECO:0007669"/>
    <property type="project" value="UniProtKB-UniRule"/>
</dbReference>
<dbReference type="GO" id="GO:0008654">
    <property type="term" value="P:phospholipid biosynthetic process"/>
    <property type="evidence" value="ECO:0007669"/>
    <property type="project" value="UniProtKB-UniRule"/>
</dbReference>
<dbReference type="HAMAP" id="MF_01043">
    <property type="entry name" value="PlsY"/>
    <property type="match status" value="1"/>
</dbReference>
<dbReference type="InterPro" id="IPR003811">
    <property type="entry name" value="G3P_acylTferase_PlsY"/>
</dbReference>
<dbReference type="NCBIfam" id="TIGR00023">
    <property type="entry name" value="glycerol-3-phosphate 1-O-acyltransferase PlsY"/>
    <property type="match status" value="1"/>
</dbReference>
<dbReference type="PANTHER" id="PTHR30309:SF0">
    <property type="entry name" value="GLYCEROL-3-PHOSPHATE ACYLTRANSFERASE-RELATED"/>
    <property type="match status" value="1"/>
</dbReference>
<dbReference type="PANTHER" id="PTHR30309">
    <property type="entry name" value="INNER MEMBRANE PROTEIN YGIH"/>
    <property type="match status" value="1"/>
</dbReference>
<dbReference type="Pfam" id="PF02660">
    <property type="entry name" value="G3P_acyltransf"/>
    <property type="match status" value="1"/>
</dbReference>
<dbReference type="SMART" id="SM01207">
    <property type="entry name" value="G3P_acyltransf"/>
    <property type="match status" value="1"/>
</dbReference>